<feature type="chain" id="PRO_0000055809" description="Putative RING-H2 finger protein ATL69">
    <location>
        <begin position="1"/>
        <end position="159"/>
    </location>
</feature>
<feature type="transmembrane region" description="Helical" evidence="2">
    <location>
        <begin position="13"/>
        <end position="33"/>
    </location>
</feature>
<feature type="zinc finger region" description="RING-type; atypical" evidence="3">
    <location>
        <begin position="94"/>
        <end position="136"/>
    </location>
</feature>
<dbReference type="EC" id="2.3.2.27" evidence="4"/>
<dbReference type="EMBL" id="AB010697">
    <property type="protein sequence ID" value="BAB11162.1"/>
    <property type="molecule type" value="Genomic_DNA"/>
</dbReference>
<dbReference type="EMBL" id="CP002688">
    <property type="protein sequence ID" value="AED91101.1"/>
    <property type="molecule type" value="Genomic_DNA"/>
</dbReference>
<dbReference type="RefSeq" id="NP_196321.1">
    <property type="nucleotide sequence ID" value="NM_120786.2"/>
</dbReference>
<dbReference type="SMR" id="Q9FL42"/>
<dbReference type="PaxDb" id="3702-AT5G07040.1"/>
<dbReference type="EnsemblPlants" id="AT5G07040.1">
    <property type="protein sequence ID" value="AT5G07040.1"/>
    <property type="gene ID" value="AT5G07040"/>
</dbReference>
<dbReference type="GeneID" id="830595"/>
<dbReference type="Gramene" id="AT5G07040.1">
    <property type="protein sequence ID" value="AT5G07040.1"/>
    <property type="gene ID" value="AT5G07040"/>
</dbReference>
<dbReference type="KEGG" id="ath:AT5G07040"/>
<dbReference type="Araport" id="AT5G07040"/>
<dbReference type="TAIR" id="AT5G07040">
    <property type="gene designation" value="ATL69"/>
</dbReference>
<dbReference type="eggNOG" id="KOG0800">
    <property type="taxonomic scope" value="Eukaryota"/>
</dbReference>
<dbReference type="HOGENOM" id="CLU_013137_15_4_1"/>
<dbReference type="InParanoid" id="Q9FL42"/>
<dbReference type="OMA" id="ICLTEYQ"/>
<dbReference type="OrthoDB" id="8062037at2759"/>
<dbReference type="PhylomeDB" id="Q9FL42"/>
<dbReference type="UniPathway" id="UPA00143"/>
<dbReference type="PRO" id="PR:Q9FL42"/>
<dbReference type="Proteomes" id="UP000006548">
    <property type="component" value="Chromosome 5"/>
</dbReference>
<dbReference type="ExpressionAtlas" id="Q9FL42">
    <property type="expression patterns" value="baseline and differential"/>
</dbReference>
<dbReference type="GO" id="GO:0016020">
    <property type="term" value="C:membrane"/>
    <property type="evidence" value="ECO:0007669"/>
    <property type="project" value="UniProtKB-SubCell"/>
</dbReference>
<dbReference type="GO" id="GO:0016740">
    <property type="term" value="F:transferase activity"/>
    <property type="evidence" value="ECO:0007669"/>
    <property type="project" value="UniProtKB-KW"/>
</dbReference>
<dbReference type="GO" id="GO:0008270">
    <property type="term" value="F:zinc ion binding"/>
    <property type="evidence" value="ECO:0007669"/>
    <property type="project" value="UniProtKB-KW"/>
</dbReference>
<dbReference type="GO" id="GO:0016567">
    <property type="term" value="P:protein ubiquitination"/>
    <property type="evidence" value="ECO:0007669"/>
    <property type="project" value="UniProtKB-UniPathway"/>
</dbReference>
<dbReference type="CDD" id="cd16461">
    <property type="entry name" value="RING-H2_EL5-like"/>
    <property type="match status" value="1"/>
</dbReference>
<dbReference type="Gene3D" id="3.30.40.10">
    <property type="entry name" value="Zinc/RING finger domain, C3HC4 (zinc finger)"/>
    <property type="match status" value="1"/>
</dbReference>
<dbReference type="InterPro" id="IPR044289">
    <property type="entry name" value="ATL67-70"/>
</dbReference>
<dbReference type="InterPro" id="IPR001841">
    <property type="entry name" value="Znf_RING"/>
</dbReference>
<dbReference type="InterPro" id="IPR013083">
    <property type="entry name" value="Znf_RING/FYVE/PHD"/>
</dbReference>
<dbReference type="PANTHER" id="PTHR46592">
    <property type="entry name" value="RING-H2 FINGER PROTEIN ATL67"/>
    <property type="match status" value="1"/>
</dbReference>
<dbReference type="PANTHER" id="PTHR46592:SF14">
    <property type="entry name" value="RING-TYPE DOMAIN-CONTAINING PROTEIN"/>
    <property type="match status" value="1"/>
</dbReference>
<dbReference type="Pfam" id="PF13639">
    <property type="entry name" value="zf-RING_2"/>
    <property type="match status" value="1"/>
</dbReference>
<dbReference type="SMART" id="SM00184">
    <property type="entry name" value="RING"/>
    <property type="match status" value="1"/>
</dbReference>
<dbReference type="SUPFAM" id="SSF57850">
    <property type="entry name" value="RING/U-box"/>
    <property type="match status" value="1"/>
</dbReference>
<dbReference type="PROSITE" id="PS50089">
    <property type="entry name" value="ZF_RING_2"/>
    <property type="match status" value="1"/>
</dbReference>
<comment type="catalytic activity">
    <reaction evidence="4">
        <text>S-ubiquitinyl-[E2 ubiquitin-conjugating enzyme]-L-cysteine + [acceptor protein]-L-lysine = [E2 ubiquitin-conjugating enzyme]-L-cysteine + N(6)-ubiquitinyl-[acceptor protein]-L-lysine.</text>
        <dbReference type="EC" id="2.3.2.27"/>
    </reaction>
</comment>
<comment type="pathway">
    <text>Protein modification; protein ubiquitination.</text>
</comment>
<comment type="subcellular location">
    <subcellularLocation>
        <location evidence="4">Membrane</location>
        <topology evidence="4">Single-pass membrane protein</topology>
    </subcellularLocation>
</comment>
<comment type="domain">
    <text evidence="1">The RING-type zinc finger domain mediates binding to an E2 ubiquitin-conjugating enzyme.</text>
</comment>
<comment type="similarity">
    <text evidence="4">Belongs to the RING-type zinc finger family. ATL subfamily.</text>
</comment>
<accession>Q9FL42</accession>
<sequence>MSPISPPASGVGLGYGIAIAVSILVLISFIMLASYICIRSKSTGRDEATSDVVLDLPSPAAEVKLGLDRPVIESYPRIVLGDSRRLPRPNNGPCSICLCDYEAREPVRCIPECNHCFHTDCVDEWLRTSATCPLCRNSPAPSRLATPLSDLVPLAFQIR</sequence>
<name>ATL69_ARATH</name>
<organism>
    <name type="scientific">Arabidopsis thaliana</name>
    <name type="common">Mouse-ear cress</name>
    <dbReference type="NCBI Taxonomy" id="3702"/>
    <lineage>
        <taxon>Eukaryota</taxon>
        <taxon>Viridiplantae</taxon>
        <taxon>Streptophyta</taxon>
        <taxon>Embryophyta</taxon>
        <taxon>Tracheophyta</taxon>
        <taxon>Spermatophyta</taxon>
        <taxon>Magnoliopsida</taxon>
        <taxon>eudicotyledons</taxon>
        <taxon>Gunneridae</taxon>
        <taxon>Pentapetalae</taxon>
        <taxon>rosids</taxon>
        <taxon>malvids</taxon>
        <taxon>Brassicales</taxon>
        <taxon>Brassicaceae</taxon>
        <taxon>Camelineae</taxon>
        <taxon>Arabidopsis</taxon>
    </lineage>
</organism>
<evidence type="ECO:0000250" key="1"/>
<evidence type="ECO:0000255" key="2"/>
<evidence type="ECO:0000255" key="3">
    <source>
        <dbReference type="PROSITE-ProRule" id="PRU00175"/>
    </source>
</evidence>
<evidence type="ECO:0000305" key="4"/>
<reference key="1">
    <citation type="journal article" date="1998" name="DNA Res.">
        <title>Structural analysis of Arabidopsis thaliana chromosome 5. V. Sequence features of the regions of 1,381,565 bp covered by twenty one physically assigned P1 and TAC clones.</title>
        <authorList>
            <person name="Kaneko T."/>
            <person name="Kotani H."/>
            <person name="Nakamura Y."/>
            <person name="Sato S."/>
            <person name="Asamizu E."/>
            <person name="Miyajima N."/>
            <person name="Tabata S."/>
        </authorList>
    </citation>
    <scope>NUCLEOTIDE SEQUENCE [LARGE SCALE GENOMIC DNA]</scope>
    <source>
        <strain>cv. Columbia</strain>
    </source>
</reference>
<reference key="2">
    <citation type="journal article" date="2017" name="Plant J.">
        <title>Araport11: a complete reannotation of the Arabidopsis thaliana reference genome.</title>
        <authorList>
            <person name="Cheng C.Y."/>
            <person name="Krishnakumar V."/>
            <person name="Chan A.P."/>
            <person name="Thibaud-Nissen F."/>
            <person name="Schobel S."/>
            <person name="Town C.D."/>
        </authorList>
    </citation>
    <scope>GENOME REANNOTATION</scope>
    <source>
        <strain>cv. Columbia</strain>
    </source>
</reference>
<reference key="3">
    <citation type="journal article" date="2002" name="Genome Biol.">
        <title>Evaluation and classification of RING-finger domains encoded by the Arabidopsis genome.</title>
        <authorList>
            <person name="Kosarev P."/>
            <person name="Mayer K.F.X."/>
            <person name="Hardtke C.S."/>
        </authorList>
    </citation>
    <scope>GENE FAMILY ORGANIZATION</scope>
</reference>
<reference key="4">
    <citation type="journal article" date="2006" name="J. Mol. Evol.">
        <title>The ATL gene family from Arabidopsis thaliana and Oryza sativa comprises a large number of putative ubiquitin ligases of the RING-H2 type.</title>
        <authorList>
            <person name="Serrano M."/>
            <person name="Parra S."/>
            <person name="Alcaraz L.D."/>
            <person name="Guzman P."/>
        </authorList>
    </citation>
    <scope>NOMENCLATURE</scope>
    <scope>GENE FAMILY ORGANIZATION</scope>
</reference>
<gene>
    <name type="primary">ATL69</name>
    <name type="ordered locus">At5g07040</name>
    <name type="ORF">MOJ9.21</name>
</gene>
<proteinExistence type="inferred from homology"/>
<keyword id="KW-0472">Membrane</keyword>
<keyword id="KW-0479">Metal-binding</keyword>
<keyword id="KW-1185">Reference proteome</keyword>
<keyword id="KW-0808">Transferase</keyword>
<keyword id="KW-0812">Transmembrane</keyword>
<keyword id="KW-1133">Transmembrane helix</keyword>
<keyword id="KW-0833">Ubl conjugation pathway</keyword>
<keyword id="KW-0862">Zinc</keyword>
<keyword id="KW-0863">Zinc-finger</keyword>
<protein>
    <recommendedName>
        <fullName>Putative RING-H2 finger protein ATL69</fullName>
        <ecNumber evidence="4">2.3.2.27</ecNumber>
    </recommendedName>
    <alternativeName>
        <fullName evidence="4">RING-type E3 ubiquitin transferase ATL69</fullName>
    </alternativeName>
</protein>